<name>PCKA_METC4</name>
<evidence type="ECO:0000255" key="1">
    <source>
        <dbReference type="HAMAP-Rule" id="MF_00453"/>
    </source>
</evidence>
<keyword id="KW-0067">ATP-binding</keyword>
<keyword id="KW-0963">Cytoplasm</keyword>
<keyword id="KW-0210">Decarboxylase</keyword>
<keyword id="KW-0312">Gluconeogenesis</keyword>
<keyword id="KW-0456">Lyase</keyword>
<keyword id="KW-0464">Manganese</keyword>
<keyword id="KW-0479">Metal-binding</keyword>
<keyword id="KW-0547">Nucleotide-binding</keyword>
<protein>
    <recommendedName>
        <fullName evidence="1">Phosphoenolpyruvate carboxykinase (ATP)</fullName>
        <shortName evidence="1">PCK</shortName>
        <shortName evidence="1">PEP carboxykinase</shortName>
        <shortName evidence="1">PEPCK</shortName>
        <ecNumber evidence="1">4.1.1.49</ecNumber>
    </recommendedName>
</protein>
<feature type="chain" id="PRO_1000192319" description="Phosphoenolpyruvate carboxykinase (ATP)">
    <location>
        <begin position="1"/>
        <end position="539"/>
    </location>
</feature>
<feature type="binding site" evidence="1">
    <location>
        <position position="61"/>
    </location>
    <ligand>
        <name>substrate</name>
    </ligand>
</feature>
<feature type="binding site" evidence="1">
    <location>
        <position position="195"/>
    </location>
    <ligand>
        <name>substrate</name>
    </ligand>
</feature>
<feature type="binding site" evidence="1">
    <location>
        <position position="201"/>
    </location>
    <ligand>
        <name>ATP</name>
        <dbReference type="ChEBI" id="CHEBI:30616"/>
    </ligand>
</feature>
<feature type="binding site" evidence="1">
    <location>
        <position position="201"/>
    </location>
    <ligand>
        <name>Mn(2+)</name>
        <dbReference type="ChEBI" id="CHEBI:29035"/>
    </ligand>
</feature>
<feature type="binding site" evidence="1">
    <location>
        <position position="201"/>
    </location>
    <ligand>
        <name>substrate</name>
    </ligand>
</feature>
<feature type="binding site" evidence="1">
    <location>
        <position position="220"/>
    </location>
    <ligand>
        <name>ATP</name>
        <dbReference type="ChEBI" id="CHEBI:30616"/>
    </ligand>
</feature>
<feature type="binding site" evidence="1">
    <location>
        <position position="220"/>
    </location>
    <ligand>
        <name>Mn(2+)</name>
        <dbReference type="ChEBI" id="CHEBI:29035"/>
    </ligand>
</feature>
<feature type="binding site" evidence="1">
    <location>
        <begin position="238"/>
        <end position="246"/>
    </location>
    <ligand>
        <name>ATP</name>
        <dbReference type="ChEBI" id="CHEBI:30616"/>
    </ligand>
</feature>
<feature type="binding site" evidence="1">
    <location>
        <position position="259"/>
    </location>
    <ligand>
        <name>Mn(2+)</name>
        <dbReference type="ChEBI" id="CHEBI:29035"/>
    </ligand>
</feature>
<feature type="binding site" evidence="1">
    <location>
        <position position="287"/>
    </location>
    <ligand>
        <name>ATP</name>
        <dbReference type="ChEBI" id="CHEBI:30616"/>
    </ligand>
</feature>
<feature type="binding site" evidence="1">
    <location>
        <position position="325"/>
    </location>
    <ligand>
        <name>ATP</name>
        <dbReference type="ChEBI" id="CHEBI:30616"/>
    </ligand>
</feature>
<feature type="binding site" evidence="1">
    <location>
        <position position="325"/>
    </location>
    <ligand>
        <name>substrate</name>
    </ligand>
</feature>
<feature type="binding site" evidence="1">
    <location>
        <position position="450"/>
    </location>
    <ligand>
        <name>ATP</name>
        <dbReference type="ChEBI" id="CHEBI:30616"/>
    </ligand>
</feature>
<gene>
    <name evidence="1" type="primary">pckA</name>
    <name type="ordered locus">Mchl_1921</name>
</gene>
<reference key="1">
    <citation type="submission" date="2008-12" db="EMBL/GenBank/DDBJ databases">
        <title>Complete sequence of chromosome of Methylobacterium chloromethanicum CM4.</title>
        <authorList>
            <consortium name="US DOE Joint Genome Institute"/>
            <person name="Lucas S."/>
            <person name="Copeland A."/>
            <person name="Lapidus A."/>
            <person name="Glavina del Rio T."/>
            <person name="Dalin E."/>
            <person name="Tice H."/>
            <person name="Bruce D."/>
            <person name="Goodwin L."/>
            <person name="Pitluck S."/>
            <person name="Chertkov O."/>
            <person name="Brettin T."/>
            <person name="Detter J.C."/>
            <person name="Han C."/>
            <person name="Larimer F."/>
            <person name="Land M."/>
            <person name="Hauser L."/>
            <person name="Kyrpides N."/>
            <person name="Mikhailova N."/>
            <person name="Marx C."/>
            <person name="Richardson P."/>
        </authorList>
    </citation>
    <scope>NUCLEOTIDE SEQUENCE [LARGE SCALE GENOMIC DNA]</scope>
    <source>
        <strain>CM4 / NCIMB 13688</strain>
    </source>
</reference>
<accession>B7KVW8</accession>
<comment type="function">
    <text evidence="1">Involved in the gluconeogenesis. Catalyzes the conversion of oxaloacetate (OAA) to phosphoenolpyruvate (PEP) through direct phosphoryl transfer between the nucleoside triphosphate and OAA.</text>
</comment>
<comment type="catalytic activity">
    <reaction evidence="1">
        <text>oxaloacetate + ATP = phosphoenolpyruvate + ADP + CO2</text>
        <dbReference type="Rhea" id="RHEA:18617"/>
        <dbReference type="ChEBI" id="CHEBI:16452"/>
        <dbReference type="ChEBI" id="CHEBI:16526"/>
        <dbReference type="ChEBI" id="CHEBI:30616"/>
        <dbReference type="ChEBI" id="CHEBI:58702"/>
        <dbReference type="ChEBI" id="CHEBI:456216"/>
        <dbReference type="EC" id="4.1.1.49"/>
    </reaction>
</comment>
<comment type="cofactor">
    <cofactor evidence="1">
        <name>Mn(2+)</name>
        <dbReference type="ChEBI" id="CHEBI:29035"/>
    </cofactor>
    <text evidence="1">Binds 1 Mn(2+) ion per subunit.</text>
</comment>
<comment type="pathway">
    <text evidence="1">Carbohydrate biosynthesis; gluconeogenesis.</text>
</comment>
<comment type="subcellular location">
    <subcellularLocation>
        <location evidence="1">Cytoplasm</location>
    </subcellularLocation>
</comment>
<comment type="similarity">
    <text evidence="1">Belongs to the phosphoenolpyruvate carboxykinase (ATP) family.</text>
</comment>
<organism>
    <name type="scientific">Methylorubrum extorquens (strain CM4 / NCIMB 13688)</name>
    <name type="common">Methylobacterium extorquens</name>
    <dbReference type="NCBI Taxonomy" id="440085"/>
    <lineage>
        <taxon>Bacteria</taxon>
        <taxon>Pseudomonadati</taxon>
        <taxon>Pseudomonadota</taxon>
        <taxon>Alphaproteobacteria</taxon>
        <taxon>Hyphomicrobiales</taxon>
        <taxon>Methylobacteriaceae</taxon>
        <taxon>Methylorubrum</taxon>
    </lineage>
</organism>
<proteinExistence type="inferred from homology"/>
<sequence>MKTIGEFNAAHGPEAIGLTDLAAVHWNLEAPRLYEEALRRNEAQLARGGALVATTGSHTGRSPKDKYVVRDAGTENEIWWDNNGSITPDQFATLLDDFRAHARGKELFAQDLFGGADPAHRVRARVYTELAWHSLFIRNLLIRPERADLAAYVPELTIIDLPSFQADPARHGCRSKTVIAIDFSQKIVLIGGSAYAGEMKKSVFTYLNYVLPGTGVMPMHCSANASLDETGDSALFFGLSGTGKTTLSNDSSRQLIGDDEHGWSRDGIFNFEGGCYAKTIRLSRNAEPEIYATTERFGTVMENVVIDPLTRVPDFDDASLTENTRCAYPLDFIANASATGRAGHPKNIVMLTCDAFGVMPPIAKLTGAEAMYHFLSGYTAKVAGTERGLTAPEATFSTCFGAPFMPRHPSVYGNLLRELMAEHGVDCWLVNTGWTGGGVGTGRRMPIRVTRRLLSAALDGSLAQVEFRRDPYFGFSVPVEVPGVETQVLSPVETWTNKAAFADTATRLVTMFRENFKRFESHVDADVRAAEPVAAAIAA</sequence>
<dbReference type="EC" id="4.1.1.49" evidence="1"/>
<dbReference type="EMBL" id="CP001298">
    <property type="protein sequence ID" value="ACK82784.1"/>
    <property type="molecule type" value="Genomic_DNA"/>
</dbReference>
<dbReference type="RefSeq" id="WP_003599882.1">
    <property type="nucleotide sequence ID" value="NC_011757.1"/>
</dbReference>
<dbReference type="SMR" id="B7KVW8"/>
<dbReference type="KEGG" id="mch:Mchl_1921"/>
<dbReference type="HOGENOM" id="CLU_018247_0_1_5"/>
<dbReference type="UniPathway" id="UPA00138"/>
<dbReference type="Proteomes" id="UP000002385">
    <property type="component" value="Chromosome"/>
</dbReference>
<dbReference type="GO" id="GO:0005829">
    <property type="term" value="C:cytosol"/>
    <property type="evidence" value="ECO:0007669"/>
    <property type="project" value="TreeGrafter"/>
</dbReference>
<dbReference type="GO" id="GO:0005524">
    <property type="term" value="F:ATP binding"/>
    <property type="evidence" value="ECO:0007669"/>
    <property type="project" value="UniProtKB-UniRule"/>
</dbReference>
<dbReference type="GO" id="GO:0046872">
    <property type="term" value="F:metal ion binding"/>
    <property type="evidence" value="ECO:0007669"/>
    <property type="project" value="UniProtKB-KW"/>
</dbReference>
<dbReference type="GO" id="GO:0004612">
    <property type="term" value="F:phosphoenolpyruvate carboxykinase (ATP) activity"/>
    <property type="evidence" value="ECO:0007669"/>
    <property type="project" value="UniProtKB-UniRule"/>
</dbReference>
<dbReference type="GO" id="GO:0006094">
    <property type="term" value="P:gluconeogenesis"/>
    <property type="evidence" value="ECO:0007669"/>
    <property type="project" value="UniProtKB-UniRule"/>
</dbReference>
<dbReference type="Gene3D" id="3.90.228.20">
    <property type="match status" value="1"/>
</dbReference>
<dbReference type="Gene3D" id="3.40.449.10">
    <property type="entry name" value="Phosphoenolpyruvate Carboxykinase, domain 1"/>
    <property type="match status" value="1"/>
</dbReference>
<dbReference type="Gene3D" id="2.170.8.10">
    <property type="entry name" value="Phosphoenolpyruvate Carboxykinase, domain 2"/>
    <property type="match status" value="1"/>
</dbReference>
<dbReference type="HAMAP" id="MF_00453">
    <property type="entry name" value="PEPCK_ATP"/>
    <property type="match status" value="1"/>
</dbReference>
<dbReference type="InterPro" id="IPR001272">
    <property type="entry name" value="PEP_carboxykinase_ATP"/>
</dbReference>
<dbReference type="InterPro" id="IPR013035">
    <property type="entry name" value="PEP_carboxykinase_C"/>
</dbReference>
<dbReference type="InterPro" id="IPR008210">
    <property type="entry name" value="PEP_carboxykinase_N"/>
</dbReference>
<dbReference type="NCBIfam" id="TIGR00224">
    <property type="entry name" value="pckA"/>
    <property type="match status" value="1"/>
</dbReference>
<dbReference type="NCBIfam" id="NF006820">
    <property type="entry name" value="PRK09344.1-2"/>
    <property type="match status" value="1"/>
</dbReference>
<dbReference type="NCBIfam" id="NF006821">
    <property type="entry name" value="PRK09344.1-3"/>
    <property type="match status" value="1"/>
</dbReference>
<dbReference type="NCBIfam" id="NF006822">
    <property type="entry name" value="PRK09344.1-4"/>
    <property type="match status" value="1"/>
</dbReference>
<dbReference type="PANTHER" id="PTHR30031:SF0">
    <property type="entry name" value="PHOSPHOENOLPYRUVATE CARBOXYKINASE (ATP)"/>
    <property type="match status" value="1"/>
</dbReference>
<dbReference type="PANTHER" id="PTHR30031">
    <property type="entry name" value="PHOSPHOENOLPYRUVATE CARBOXYKINASE ATP"/>
    <property type="match status" value="1"/>
</dbReference>
<dbReference type="Pfam" id="PF01293">
    <property type="entry name" value="PEPCK_ATP"/>
    <property type="match status" value="1"/>
</dbReference>
<dbReference type="PIRSF" id="PIRSF006294">
    <property type="entry name" value="PEP_crbxkin"/>
    <property type="match status" value="1"/>
</dbReference>
<dbReference type="SUPFAM" id="SSF68923">
    <property type="entry name" value="PEP carboxykinase N-terminal domain"/>
    <property type="match status" value="1"/>
</dbReference>
<dbReference type="SUPFAM" id="SSF53795">
    <property type="entry name" value="PEP carboxykinase-like"/>
    <property type="match status" value="1"/>
</dbReference>